<comment type="function">
    <text evidence="1">Capsid protein (CA) is the structural component of the virus-like particle (VLP), forming the shell that encapsulates the retrotransposons dimeric RNA genome. The particles are assembled from trimer-clustered units and there are holes in the capsid shells that allow for the diffusion of macromolecules. CA also has nucleocapsid-like chaperone activity, promoting primer tRNA(i)-Met annealing to the multipartite primer-binding site (PBS), dimerization of Ty1 RNA and initiation of reverse transcription (By similarity).</text>
</comment>
<comment type="subunit">
    <text evidence="1">Homotrimer.</text>
</comment>
<comment type="subcellular location">
    <subcellularLocation>
        <location evidence="1">Cytoplasm</location>
    </subcellularLocation>
</comment>
<comment type="alternative products">
    <event type="ribosomal frameshifting"/>
    <isoform>
        <id>P0CX67-1</id>
        <name>Transposon Ty1-GR3 Gag polyprotein</name>
        <sequence type="displayed"/>
    </isoform>
    <isoform>
        <id>Q12316-1</id>
        <name>Transposon Ty1-GR3 Gag-Pol polyprotein</name>
        <sequence type="external"/>
    </isoform>
    <text evidence="1">The Gag-Pol polyprotein is generated by a +1 ribosomal frameshift between the codons for Leu-435 and Gly-436. The ratio of Gag:Gag-Pol varies between 20:1 and 5:1 (By similarity).</text>
</comment>
<comment type="induction">
    <text evidence="4">Ty1-GR3 is a weakly expressed element. Induced under amino acid starvation conditions by GCN4.</text>
</comment>
<comment type="domain">
    <text evidence="1">The C-terminal RNA-binding region of CA is sufficient for all its nucleocapsid-like chaperone activities.</text>
</comment>
<comment type="miscellaneous">
    <text>Retrotransposons are mobile genetic entities that are able to replicate via an RNA intermediate and a reverse transcription step. In contrast to retroviruses, retrotransposons are non-infectious, lack an envelope and remain intracellular. Ty1 retrotransposons belong to the copia elements (pseudoviridae).</text>
</comment>
<comment type="miscellaneous">
    <molecule>Isoform Transposon Ty1-GR3 Gag polyprotein</molecule>
    <text>Produced by conventional translation.</text>
</comment>
<accession>P0CX67</accession>
<accession>D3DM68</accession>
<accession>Q12231</accession>
<dbReference type="EMBL" id="Z72946">
    <property type="protein sequence ID" value="CAA97179.1"/>
    <property type="molecule type" value="Genomic_DNA"/>
</dbReference>
<dbReference type="EMBL" id="Z72947">
    <property type="protein sequence ID" value="CAA97183.1"/>
    <property type="molecule type" value="Genomic_DNA"/>
</dbReference>
<dbReference type="EMBL" id="BK006941">
    <property type="protein sequence ID" value="DAA08256.1"/>
    <property type="molecule type" value="Genomic_DNA"/>
</dbReference>
<dbReference type="PIR" id="S53588">
    <property type="entry name" value="S53588"/>
</dbReference>
<dbReference type="RefSeq" id="NP_013766.1">
    <molecule id="P0CX67-1"/>
    <property type="nucleotide sequence ID" value="NM_001182548.1"/>
</dbReference>
<dbReference type="RefSeq" id="NP_058151.1">
    <molecule id="P0CX67-1"/>
    <property type="nucleotide sequence ID" value="NM_001184424.1"/>
</dbReference>
<dbReference type="RefSeq" id="NP_058156.1">
    <molecule id="P0CX67-1"/>
    <property type="nucleotide sequence ID" value="NM_001184429.1"/>
</dbReference>
<dbReference type="RefSeq" id="NP_058166.1">
    <molecule id="P0CX67-1"/>
    <property type="nucleotide sequence ID" value="NM_001184399.1"/>
</dbReference>
<dbReference type="SMR" id="P0CX67"/>
<dbReference type="BioGRID" id="32371">
    <property type="interactions" value="2"/>
</dbReference>
<dbReference type="BioGRID" id="33412">
    <property type="interactions" value="5"/>
</dbReference>
<dbReference type="BioGRID" id="35226">
    <property type="interactions" value="5"/>
</dbReference>
<dbReference type="BioGRID" id="36913">
    <property type="interactions" value="2"/>
</dbReference>
<dbReference type="FunCoup" id="P0CX67">
    <property type="interactions" value="71"/>
</dbReference>
<dbReference type="IntAct" id="P0CX67">
    <property type="interactions" value="1"/>
</dbReference>
<dbReference type="MINT" id="P0CX67"/>
<dbReference type="GlyGen" id="P0CX67">
    <property type="glycosylation" value="2 sites"/>
</dbReference>
<dbReference type="GeneID" id="853069"/>
<dbReference type="KEGG" id="sce:YDR316W-A"/>
<dbReference type="KEGG" id="sce:YER159C-A"/>
<dbReference type="KEGG" id="sce:YGR161C-C"/>
<dbReference type="KEGG" id="sce:YMR051C"/>
<dbReference type="AGR" id="SGD:S000007367"/>
<dbReference type="SGD" id="S000007367">
    <property type="gene designation" value="YGR161C-C"/>
</dbReference>
<dbReference type="VEuPathDB" id="FungiDB:YDR316W-A"/>
<dbReference type="VEuPathDB" id="FungiDB:YER159C-A"/>
<dbReference type="VEuPathDB" id="FungiDB:YGR161C-C"/>
<dbReference type="VEuPathDB" id="FungiDB:YMR051C"/>
<dbReference type="HOGENOM" id="CLU_045291_1_0_1"/>
<dbReference type="InParanoid" id="P0CX67"/>
<dbReference type="OrthoDB" id="4046078at2759"/>
<dbReference type="Proteomes" id="UP000002311">
    <property type="component" value="Chromosome VII"/>
</dbReference>
<dbReference type="RNAct" id="P0CX67">
    <property type="molecule type" value="protein"/>
</dbReference>
<dbReference type="GO" id="GO:0005737">
    <property type="term" value="C:cytoplasm"/>
    <property type="evidence" value="ECO:0007669"/>
    <property type="project" value="UniProtKB-SubCell"/>
</dbReference>
<dbReference type="GO" id="GO:0003723">
    <property type="term" value="F:RNA binding"/>
    <property type="evidence" value="ECO:0007669"/>
    <property type="project" value="UniProtKB-KW"/>
</dbReference>
<dbReference type="GO" id="GO:0075523">
    <property type="term" value="P:viral translational frameshifting"/>
    <property type="evidence" value="ECO:0007669"/>
    <property type="project" value="UniProtKB-KW"/>
</dbReference>
<dbReference type="InterPro" id="IPR015820">
    <property type="entry name" value="TYA"/>
</dbReference>
<dbReference type="Pfam" id="PF01021">
    <property type="entry name" value="TYA"/>
    <property type="match status" value="1"/>
</dbReference>
<reference key="1">
    <citation type="journal article" date="1997" name="Nature">
        <title>The nucleotide sequence of Saccharomyces cerevisiae chromosome VII.</title>
        <authorList>
            <person name="Tettelin H."/>
            <person name="Agostoni-Carbone M.L."/>
            <person name="Albermann K."/>
            <person name="Albers M."/>
            <person name="Arroyo J."/>
            <person name="Backes U."/>
            <person name="Barreiros T."/>
            <person name="Bertani I."/>
            <person name="Bjourson A.J."/>
            <person name="Brueckner M."/>
            <person name="Bruschi C.V."/>
            <person name="Carignani G."/>
            <person name="Castagnoli L."/>
            <person name="Cerdan E."/>
            <person name="Clemente M.L."/>
            <person name="Coblenz A."/>
            <person name="Coglievina M."/>
            <person name="Coissac E."/>
            <person name="Defoor E."/>
            <person name="Del Bino S."/>
            <person name="Delius H."/>
            <person name="Delneri D."/>
            <person name="de Wergifosse P."/>
            <person name="Dujon B."/>
            <person name="Durand P."/>
            <person name="Entian K.-D."/>
            <person name="Eraso P."/>
            <person name="Escribano V."/>
            <person name="Fabiani L."/>
            <person name="Fartmann B."/>
            <person name="Feroli F."/>
            <person name="Feuermann M."/>
            <person name="Frontali L."/>
            <person name="Garcia-Gonzalez M."/>
            <person name="Garcia-Saez M.I."/>
            <person name="Goffeau A."/>
            <person name="Guerreiro P."/>
            <person name="Hani J."/>
            <person name="Hansen M."/>
            <person name="Hebling U."/>
            <person name="Hernandez K."/>
            <person name="Heumann K."/>
            <person name="Hilger F."/>
            <person name="Hofmann B."/>
            <person name="Indge K.J."/>
            <person name="James C.M."/>
            <person name="Klima R."/>
            <person name="Koetter P."/>
            <person name="Kramer B."/>
            <person name="Kramer W."/>
            <person name="Lauquin G."/>
            <person name="Leuther H."/>
            <person name="Louis E.J."/>
            <person name="Maillier E."/>
            <person name="Marconi A."/>
            <person name="Martegani E."/>
            <person name="Mazon M.J."/>
            <person name="Mazzoni C."/>
            <person name="McReynolds A.D.K."/>
            <person name="Melchioretto P."/>
            <person name="Mewes H.-W."/>
            <person name="Minenkova O."/>
            <person name="Mueller-Auer S."/>
            <person name="Nawrocki A."/>
            <person name="Netter P."/>
            <person name="Neu R."/>
            <person name="Nombela C."/>
            <person name="Oliver S.G."/>
            <person name="Panzeri L."/>
            <person name="Paoluzi S."/>
            <person name="Plevani P."/>
            <person name="Portetelle D."/>
            <person name="Portillo F."/>
            <person name="Potier S."/>
            <person name="Purnelle B."/>
            <person name="Rieger M."/>
            <person name="Riles L."/>
            <person name="Rinaldi T."/>
            <person name="Robben J."/>
            <person name="Rodrigues-Pousada C."/>
            <person name="Rodriguez-Belmonte E."/>
            <person name="Rodriguez-Torres A.M."/>
            <person name="Rose M."/>
            <person name="Ruzzi M."/>
            <person name="Saliola M."/>
            <person name="Sanchez-Perez M."/>
            <person name="Schaefer B."/>
            <person name="Schaefer M."/>
            <person name="Scharfe M."/>
            <person name="Schmidheini T."/>
            <person name="Schreer A."/>
            <person name="Skala J."/>
            <person name="Souciet J.-L."/>
            <person name="Steensma H.Y."/>
            <person name="Talla E."/>
            <person name="Thierry A."/>
            <person name="Vandenbol M."/>
            <person name="van der Aart Q.J.M."/>
            <person name="Van Dyck L."/>
            <person name="Vanoni M."/>
            <person name="Verhasselt P."/>
            <person name="Voet M."/>
            <person name="Volckaert G."/>
            <person name="Wambutt R."/>
            <person name="Watson M.D."/>
            <person name="Weber N."/>
            <person name="Wedler E."/>
            <person name="Wedler H."/>
            <person name="Wipfli P."/>
            <person name="Wolf K."/>
            <person name="Wright L.F."/>
            <person name="Zaccaria P."/>
            <person name="Zimmermann M."/>
            <person name="Zollner A."/>
            <person name="Kleine K."/>
        </authorList>
    </citation>
    <scope>NUCLEOTIDE SEQUENCE [LARGE SCALE GENOMIC DNA]</scope>
    <source>
        <strain>ATCC 204508 / S288c</strain>
    </source>
</reference>
<reference key="2">
    <citation type="journal article" date="2014" name="G3 (Bethesda)">
        <title>The reference genome sequence of Saccharomyces cerevisiae: Then and now.</title>
        <authorList>
            <person name="Engel S.R."/>
            <person name="Dietrich F.S."/>
            <person name="Fisk D.G."/>
            <person name="Binkley G."/>
            <person name="Balakrishnan R."/>
            <person name="Costanzo M.C."/>
            <person name="Dwight S.S."/>
            <person name="Hitz B.C."/>
            <person name="Karra K."/>
            <person name="Nash R.S."/>
            <person name="Weng S."/>
            <person name="Wong E.D."/>
            <person name="Lloyd P."/>
            <person name="Skrzypek M.S."/>
            <person name="Miyasato S.R."/>
            <person name="Simison M."/>
            <person name="Cherry J.M."/>
        </authorList>
    </citation>
    <scope>GENOME REANNOTATION</scope>
    <source>
        <strain>ATCC 204508 / S288c</strain>
    </source>
</reference>
<reference key="3">
    <citation type="journal article" date="2007" name="Genome Res.">
        <title>Approaching a complete repository of sequence-verified protein-encoding clones for Saccharomyces cerevisiae.</title>
        <authorList>
            <person name="Hu Y."/>
            <person name="Rolfs A."/>
            <person name="Bhullar B."/>
            <person name="Murthy T.V.S."/>
            <person name="Zhu C."/>
            <person name="Berger M.F."/>
            <person name="Camargo A.A."/>
            <person name="Kelley F."/>
            <person name="McCarron S."/>
            <person name="Jepson D."/>
            <person name="Richardson A."/>
            <person name="Raphael J."/>
            <person name="Moreira D."/>
            <person name="Taycher E."/>
            <person name="Zuo D."/>
            <person name="Mohr S."/>
            <person name="Kane M.F."/>
            <person name="Williamson J."/>
            <person name="Simpson A.J.G."/>
            <person name="Bulyk M.L."/>
            <person name="Harlow E."/>
            <person name="Marsischky G."/>
            <person name="Kolodner R.D."/>
            <person name="LaBaer J."/>
        </authorList>
    </citation>
    <scope>NUCLEOTIDE SEQUENCE [GENOMIC DNA]</scope>
    <source>
        <strain>ATCC 204508 / S288c</strain>
    </source>
</reference>
<reference key="4">
    <citation type="journal article" date="1998" name="Genome Res.">
        <title>Transposable elements and genome organization: a comprehensive survey of retrotransposons revealed by the complete Saccharomyces cerevisiae genome sequence.</title>
        <authorList>
            <person name="Kim J.M."/>
            <person name="Vanguri S."/>
            <person name="Boeke J.D."/>
            <person name="Gabriel A."/>
            <person name="Voytas D.F."/>
        </authorList>
    </citation>
    <scope>NOMENCLATURE</scope>
</reference>
<reference key="5">
    <citation type="journal article" date="2002" name="Mol. Cell. Biol.">
        <title>Differential effects of chromatin and Gcn4 on the 50-fold range of expression among individual yeast Ty1 retrotransposons.</title>
        <authorList>
            <person name="Morillon A."/>
            <person name="Benard L."/>
            <person name="Springer M."/>
            <person name="Lesage P."/>
        </authorList>
    </citation>
    <scope>INDUCTION</scope>
</reference>
<reference key="6">
    <citation type="journal article" date="2005" name="Cytogenet. Genome Res.">
        <title>Happy together: the life and times of Ty retrotransposons and their hosts.</title>
        <authorList>
            <person name="Lesage P."/>
            <person name="Todeschini A.L."/>
        </authorList>
    </citation>
    <scope>REVIEW</scope>
</reference>
<proteinExistence type="evidence at transcript level"/>
<organism>
    <name type="scientific">Saccharomyces cerevisiae (strain ATCC 204508 / S288c)</name>
    <name type="common">Baker's yeast</name>
    <dbReference type="NCBI Taxonomy" id="559292"/>
    <lineage>
        <taxon>Eukaryota</taxon>
        <taxon>Fungi</taxon>
        <taxon>Dikarya</taxon>
        <taxon>Ascomycota</taxon>
        <taxon>Saccharomycotina</taxon>
        <taxon>Saccharomycetes</taxon>
        <taxon>Saccharomycetales</taxon>
        <taxon>Saccharomycetaceae</taxon>
        <taxon>Saccharomyces</taxon>
    </lineage>
</organism>
<sequence>MESQQLSNYPHISHGSACASVTSKEVHTNQDPLDVSASKIQEYDKASTKANSQQTTTPASSAVPENPHHASPQPASVPPPQNGPYPQQCMMTQNQANPSGWSFYGHPSMIPYTPYQMSPMYFPPGPQSQFPQYPSSVGTPLSTPSPESGNTFTDSSSADSDMTSTKKYVRPPPMLTSPNDFPNWVKTYIKFLQNSNLGGIIPTVNGKPVRQITDDELTFLYNTFQIFAPSQFLPTWVKDILSVDYTDIMKILSKSIEKMQSDTQEANDIVTLANLQYNGSTPADAFETKVTNIIDRLNNNGIHINNKVACQLIMRGLSGEYKFLRYTRHRHLNMTVAELFLDIHAIYEEQQGSRNSKPNYRRNPSDEKNDSRSYTNTTKPKVIARNPQKTNNSKSKTARAHNVSTSNNSPSTDNDSISKSTTEPIQLNNKHDLHLRPETY</sequence>
<protein>
    <recommendedName>
        <fullName>Transposon Ty1-GR3 Gag polyprotein</fullName>
    </recommendedName>
    <alternativeName>
        <fullName>Gag-p49</fullName>
    </alternativeName>
    <alternativeName>
        <fullName>Transposon Ty1 protein A</fullName>
        <shortName>TY1A</shortName>
        <shortName>TYA</shortName>
    </alternativeName>
    <alternativeName>
        <fullName>p58</fullName>
    </alternativeName>
    <component>
        <recommendedName>
            <fullName>Capsid protein</fullName>
            <shortName>CA</shortName>
        </recommendedName>
        <alternativeName>
            <fullName>Gag-p45</fullName>
        </alternativeName>
        <alternativeName>
            <fullName>p54</fullName>
        </alternativeName>
    </component>
    <component>
        <recommendedName>
            <fullName>Gag-p4</fullName>
        </recommendedName>
    </component>
</protein>
<feature type="chain" id="PRO_0000409782" description="Transposon Ty1-GR3 Gag polyprotein">
    <location>
        <begin position="1"/>
        <end position="440"/>
    </location>
</feature>
<feature type="chain" id="PRO_0000409783" description="Capsid protein" evidence="1">
    <location>
        <begin position="1"/>
        <end position="401"/>
    </location>
</feature>
<feature type="peptide" id="PRO_0000409784" description="Gag-p4" evidence="1">
    <location>
        <begin position="402"/>
        <end position="440"/>
    </location>
</feature>
<feature type="region of interest" description="Disordered" evidence="3">
    <location>
        <begin position="1"/>
        <end position="93"/>
    </location>
</feature>
<feature type="region of interest" description="Disordered" evidence="3">
    <location>
        <begin position="126"/>
        <end position="173"/>
    </location>
</feature>
<feature type="region of interest" description="RNA-binding" evidence="1">
    <location>
        <begin position="299"/>
        <end position="401"/>
    </location>
</feature>
<feature type="region of interest" description="Disordered" evidence="3">
    <location>
        <begin position="352"/>
        <end position="440"/>
    </location>
</feature>
<feature type="compositionally biased region" description="Polar residues" evidence="3">
    <location>
        <begin position="1"/>
        <end position="10"/>
    </location>
</feature>
<feature type="compositionally biased region" description="Polar residues" evidence="3">
    <location>
        <begin position="48"/>
        <end position="60"/>
    </location>
</feature>
<feature type="compositionally biased region" description="Polar residues" evidence="3">
    <location>
        <begin position="127"/>
        <end position="152"/>
    </location>
</feature>
<feature type="compositionally biased region" description="Low complexity" evidence="3">
    <location>
        <begin position="153"/>
        <end position="165"/>
    </location>
</feature>
<feature type="compositionally biased region" description="Low complexity" evidence="3">
    <location>
        <begin position="402"/>
        <end position="418"/>
    </location>
</feature>
<feature type="compositionally biased region" description="Polar residues" evidence="3">
    <location>
        <begin position="419"/>
        <end position="428"/>
    </location>
</feature>
<feature type="compositionally biased region" description="Basic and acidic residues" evidence="3">
    <location>
        <begin position="429"/>
        <end position="440"/>
    </location>
</feature>
<feature type="site" description="Cleavage; by Ty1 protease" evidence="1">
    <location>
        <begin position="401"/>
        <end position="402"/>
    </location>
</feature>
<feature type="modified residue" description="Phosphoserine" evidence="2">
    <location>
        <position position="416"/>
    </location>
</feature>
<gene>
    <name type="primary">TY1A-GR3</name>
    <name type="synonym">YGRCTy1-3 GAG</name>
    <name type="ordered locus">YGR161C-C</name>
    <name type="ORF">G7028</name>
</gene>
<evidence type="ECO:0000250" key="1"/>
<evidence type="ECO:0000250" key="2">
    <source>
        <dbReference type="UniProtKB" id="Q12441"/>
    </source>
</evidence>
<evidence type="ECO:0000256" key="3">
    <source>
        <dbReference type="SAM" id="MobiDB-lite"/>
    </source>
</evidence>
<evidence type="ECO:0000269" key="4">
    <source>
    </source>
</evidence>
<keyword id="KW-0963">Cytoplasm</keyword>
<keyword id="KW-0597">Phosphoprotein</keyword>
<keyword id="KW-1185">Reference proteome</keyword>
<keyword id="KW-0688">Ribosomal frameshifting</keyword>
<keyword id="KW-0694">RNA-binding</keyword>
<keyword id="KW-0814">Transposable element</keyword>
<name>YG13A_YEAST</name>